<name>H2A1F_MOUSE</name>
<feature type="initiator methionine" description="Removed" evidence="12">
    <location>
        <position position="1"/>
    </location>
</feature>
<feature type="chain" id="PRO_0000227502" description="Histone H2A type 1-F">
    <location>
        <begin position="2"/>
        <end position="130"/>
    </location>
</feature>
<feature type="region of interest" description="Disordered" evidence="4">
    <location>
        <begin position="1"/>
        <end position="22"/>
    </location>
</feature>
<feature type="compositionally biased region" description="Basic residues" evidence="4">
    <location>
        <begin position="7"/>
        <end position="19"/>
    </location>
</feature>
<feature type="modified residue" description="Phosphoserine; by RPS6KA5" evidence="3">
    <location>
        <position position="2"/>
    </location>
</feature>
<feature type="modified residue" description="Citrulline; alternate" evidence="3">
    <location>
        <position position="4"/>
    </location>
</feature>
<feature type="modified residue" description="Symmetric dimethylarginine; by PRMT5; alternate" evidence="13">
    <location>
        <position position="4"/>
    </location>
</feature>
<feature type="modified residue" description="N6-(2-hydroxyisobutyryl)lysine; alternate" evidence="10">
    <location>
        <position position="6"/>
    </location>
</feature>
<feature type="modified residue" description="N6-(beta-hydroxybutyryl)lysine; alternate" evidence="11">
    <location>
        <position position="6"/>
    </location>
</feature>
<feature type="modified residue" description="N6-(2-hydroxyisobutyryl)lysine" evidence="10">
    <location>
        <position position="10"/>
    </location>
</feature>
<feature type="modified residue" description="N6-lactoyllysine; alternate" evidence="2">
    <location>
        <position position="10"/>
    </location>
</feature>
<feature type="modified residue" description="N6-(2-hydroxyisobutyryl)lysine; alternate" evidence="10">
    <location>
        <position position="37"/>
    </location>
</feature>
<feature type="modified residue" description="N6-(beta-hydroxybutyryl)lysine; alternate" evidence="11">
    <location>
        <position position="37"/>
    </location>
</feature>
<feature type="modified residue" description="N6-crotonyllysine; alternate" evidence="8">
    <location>
        <position position="37"/>
    </location>
</feature>
<feature type="modified residue" description="N6-(2-hydroxyisobutyryl)lysine" evidence="10">
    <location>
        <position position="75"/>
    </location>
</feature>
<feature type="modified residue" description="N6-(2-hydroxyisobutyryl)lysine" evidence="10">
    <location>
        <position position="76"/>
    </location>
</feature>
<feature type="modified residue" description="N6-(2-hydroxyisobutyryl)lysine" evidence="10">
    <location>
        <position position="96"/>
    </location>
</feature>
<feature type="modified residue" description="N6-glutaryllysine; alternate" evidence="3">
    <location>
        <position position="96"/>
    </location>
</feature>
<feature type="modified residue" description="N5-methylglutamine" evidence="9">
    <location>
        <position position="105"/>
    </location>
</feature>
<feature type="modified residue" description="N6-(2-hydroxyisobutyryl)lysine; alternate" evidence="10">
    <location>
        <position position="119"/>
    </location>
</feature>
<feature type="modified residue" description="N6-crotonyllysine; alternate" evidence="8">
    <location>
        <position position="119"/>
    </location>
</feature>
<feature type="modified residue" description="N6-glutaryllysine; alternate" evidence="3">
    <location>
        <position position="119"/>
    </location>
</feature>
<feature type="modified residue" description="N6-(beta-hydroxybutyryl)lysine; alternate" evidence="11">
    <location>
        <position position="120"/>
    </location>
</feature>
<feature type="modified residue" description="N6-crotonyllysine; alternate" evidence="3">
    <location>
        <position position="120"/>
    </location>
</feature>
<feature type="modified residue" description="N6-glutaryllysine; alternate" evidence="3">
    <location>
        <position position="120"/>
    </location>
</feature>
<feature type="modified residue" description="Phosphothreonine; by DCAF1" evidence="1">
    <location>
        <position position="121"/>
    </location>
</feature>
<feature type="modified residue" description="N6-(beta-hydroxybutyryl)lysine; alternate" evidence="11">
    <location>
        <position position="126"/>
    </location>
</feature>
<feature type="modified residue" description="N6-crotonyllysine; alternate" evidence="3">
    <location>
        <position position="126"/>
    </location>
</feature>
<feature type="modified residue" description="N6-glutaryllysine; alternate" evidence="3">
    <location>
        <position position="126"/>
    </location>
</feature>
<feature type="cross-link" description="Glycyl lysine isopeptide (Lys-Gly) (interchain with G-Cter in ubiquitin); alternate" evidence="5 6">
    <location>
        <position position="120"/>
    </location>
</feature>
<keyword id="KW-0007">Acetylation</keyword>
<keyword id="KW-0158">Chromosome</keyword>
<keyword id="KW-0164">Citrullination</keyword>
<keyword id="KW-0238">DNA-binding</keyword>
<keyword id="KW-0379">Hydroxylation</keyword>
<keyword id="KW-1017">Isopeptide bond</keyword>
<keyword id="KW-0488">Methylation</keyword>
<keyword id="KW-0544">Nucleosome core</keyword>
<keyword id="KW-0539">Nucleus</keyword>
<keyword id="KW-0597">Phosphoprotein</keyword>
<keyword id="KW-1185">Reference proteome</keyword>
<keyword id="KW-0832">Ubl conjugation</keyword>
<accession>Q8CGP5</accession>
<accession>Q08AU5</accession>
<gene>
    <name type="primary">Hist1h2af</name>
</gene>
<organism>
    <name type="scientific">Mus musculus</name>
    <name type="common">Mouse</name>
    <dbReference type="NCBI Taxonomy" id="10090"/>
    <lineage>
        <taxon>Eukaryota</taxon>
        <taxon>Metazoa</taxon>
        <taxon>Chordata</taxon>
        <taxon>Craniata</taxon>
        <taxon>Vertebrata</taxon>
        <taxon>Euteleostomi</taxon>
        <taxon>Mammalia</taxon>
        <taxon>Eutheria</taxon>
        <taxon>Euarchontoglires</taxon>
        <taxon>Glires</taxon>
        <taxon>Rodentia</taxon>
        <taxon>Myomorpha</taxon>
        <taxon>Muroidea</taxon>
        <taxon>Muridae</taxon>
        <taxon>Murinae</taxon>
        <taxon>Mus</taxon>
        <taxon>Mus</taxon>
    </lineage>
</organism>
<proteinExistence type="evidence at protein level"/>
<dbReference type="EMBL" id="AY158916">
    <property type="protein sequence ID" value="AAO06226.1"/>
    <property type="molecule type" value="Genomic_DNA"/>
</dbReference>
<dbReference type="EMBL" id="BC125011">
    <property type="protein sequence ID" value="AAI25012.1"/>
    <property type="molecule type" value="mRNA"/>
</dbReference>
<dbReference type="CCDS" id="CCDS26341.1"/>
<dbReference type="RefSeq" id="NP_783592.1">
    <property type="nucleotide sequence ID" value="NM_175661.2"/>
</dbReference>
<dbReference type="SMR" id="Q8CGP5"/>
<dbReference type="BioGRID" id="235092">
    <property type="interactions" value="5"/>
</dbReference>
<dbReference type="FunCoup" id="Q8CGP5">
    <property type="interactions" value="247"/>
</dbReference>
<dbReference type="IntAct" id="Q8CGP5">
    <property type="interactions" value="1"/>
</dbReference>
<dbReference type="STRING" id="10090.ENSMUSP00000072989"/>
<dbReference type="GlyGen" id="Q8CGP5">
    <property type="glycosylation" value="1 site, 1 O-linked glycan (1 site)"/>
</dbReference>
<dbReference type="iPTMnet" id="Q8CGP5"/>
<dbReference type="PhosphoSitePlus" id="Q8CGP5"/>
<dbReference type="SwissPalm" id="Q8CGP5"/>
<dbReference type="jPOST" id="Q8CGP5"/>
<dbReference type="PaxDb" id="10090-ENSMUSP00000072989"/>
<dbReference type="PeptideAtlas" id="Q8CGP5"/>
<dbReference type="ProteomicsDB" id="269707"/>
<dbReference type="Pumba" id="Q8CGP5"/>
<dbReference type="TopDownProteomics" id="Q8CGP5"/>
<dbReference type="Ensembl" id="ENSMUST00000073261.3">
    <property type="protein sequence ID" value="ENSMUSP00000072989.3"/>
    <property type="gene ID" value="ENSMUSG00000061991.3"/>
</dbReference>
<dbReference type="GeneID" id="319173"/>
<dbReference type="KEGG" id="mmu:319173"/>
<dbReference type="UCSC" id="uc007ptw.2">
    <property type="organism name" value="mouse"/>
</dbReference>
<dbReference type="AGR" id="MGI:2448309"/>
<dbReference type="CTD" id="319173"/>
<dbReference type="MGI" id="MGI:2448309">
    <property type="gene designation" value="Hist1h2af"/>
</dbReference>
<dbReference type="VEuPathDB" id="HostDB:ENSMUSG00000061991"/>
<dbReference type="eggNOG" id="KOG1756">
    <property type="taxonomic scope" value="Eukaryota"/>
</dbReference>
<dbReference type="GeneTree" id="ENSGT00940000153092"/>
<dbReference type="HOGENOM" id="CLU_062828_3_1_1"/>
<dbReference type="InParanoid" id="Q8CGP5"/>
<dbReference type="OMA" id="LILECFW"/>
<dbReference type="OrthoDB" id="9610409at2759"/>
<dbReference type="PhylomeDB" id="Q8CGP5"/>
<dbReference type="TreeFam" id="TF300137"/>
<dbReference type="Reactome" id="R-MMU-110330">
    <property type="pathway name" value="Recognition and association of DNA glycosylase with site containing an affected purine"/>
</dbReference>
<dbReference type="Reactome" id="R-MMU-110331">
    <property type="pathway name" value="Cleavage of the damaged purine"/>
</dbReference>
<dbReference type="Reactome" id="R-MMU-212300">
    <property type="pathway name" value="PRC2 methylates histones and DNA"/>
</dbReference>
<dbReference type="Reactome" id="R-MMU-2299718">
    <property type="pathway name" value="Condensation of Prophase Chromosomes"/>
</dbReference>
<dbReference type="Reactome" id="R-MMU-2559586">
    <property type="pathway name" value="DNA Damage/Telomere Stress Induced Senescence"/>
</dbReference>
<dbReference type="Reactome" id="R-MMU-3214815">
    <property type="pathway name" value="HDACs deacetylate histones"/>
</dbReference>
<dbReference type="Reactome" id="R-MMU-3214858">
    <property type="pathway name" value="RMTs methylate histone arginines"/>
</dbReference>
<dbReference type="Reactome" id="R-MMU-5689603">
    <property type="pathway name" value="UCH proteinases"/>
</dbReference>
<dbReference type="Reactome" id="R-MMU-5689880">
    <property type="pathway name" value="Ub-specific processing proteases"/>
</dbReference>
<dbReference type="Reactome" id="R-MMU-5689901">
    <property type="pathway name" value="Metalloprotease DUBs"/>
</dbReference>
<dbReference type="Reactome" id="R-MMU-606279">
    <property type="pathway name" value="Deposition of new CENPA-containing nucleosomes at the centromere"/>
</dbReference>
<dbReference type="Reactome" id="R-MMU-8936459">
    <property type="pathway name" value="RUNX1 regulates genes involved in megakaryocyte differentiation and platelet function"/>
</dbReference>
<dbReference type="Reactome" id="R-MMU-9670095">
    <property type="pathway name" value="Inhibition of DNA recombination at telomere"/>
</dbReference>
<dbReference type="Reactome" id="R-MMU-9841922">
    <property type="pathway name" value="MLL4 and MLL3 complexes regulate expression of PPARG target genes in adipogenesis and hepatic steatosis"/>
</dbReference>
<dbReference type="Reactome" id="R-MMU-9843940">
    <property type="pathway name" value="Regulation of endogenous retroelements by KRAB-ZFP proteins"/>
</dbReference>
<dbReference type="BioGRID-ORCS" id="319173">
    <property type="hits" value="8 hits in 75 CRISPR screens"/>
</dbReference>
<dbReference type="CD-CODE" id="DE1E139C">
    <property type="entry name" value="Chromatoid body"/>
</dbReference>
<dbReference type="PRO" id="PR:Q8CGP5"/>
<dbReference type="Proteomes" id="UP000000589">
    <property type="component" value="Chromosome 13"/>
</dbReference>
<dbReference type="RNAct" id="Q8CGP5">
    <property type="molecule type" value="protein"/>
</dbReference>
<dbReference type="Bgee" id="ENSMUSG00000061991">
    <property type="expression patterns" value="Expressed in uterus and 51 other cell types or tissues"/>
</dbReference>
<dbReference type="GO" id="GO:0000786">
    <property type="term" value="C:nucleosome"/>
    <property type="evidence" value="ECO:0007669"/>
    <property type="project" value="UniProtKB-KW"/>
</dbReference>
<dbReference type="GO" id="GO:0005634">
    <property type="term" value="C:nucleus"/>
    <property type="evidence" value="ECO:0007669"/>
    <property type="project" value="UniProtKB-SubCell"/>
</dbReference>
<dbReference type="GO" id="GO:0003677">
    <property type="term" value="F:DNA binding"/>
    <property type="evidence" value="ECO:0007669"/>
    <property type="project" value="UniProtKB-KW"/>
</dbReference>
<dbReference type="GO" id="GO:0046982">
    <property type="term" value="F:protein heterodimerization activity"/>
    <property type="evidence" value="ECO:0007669"/>
    <property type="project" value="InterPro"/>
</dbReference>
<dbReference type="GO" id="GO:0030527">
    <property type="term" value="F:structural constituent of chromatin"/>
    <property type="evidence" value="ECO:0007669"/>
    <property type="project" value="InterPro"/>
</dbReference>
<dbReference type="CDD" id="cd00074">
    <property type="entry name" value="HFD_H2A"/>
    <property type="match status" value="1"/>
</dbReference>
<dbReference type="FunFam" id="1.10.20.10:FF:000103">
    <property type="entry name" value="Histone H2A type 1"/>
    <property type="match status" value="1"/>
</dbReference>
<dbReference type="Gene3D" id="1.10.20.10">
    <property type="entry name" value="Histone, subunit A"/>
    <property type="match status" value="1"/>
</dbReference>
<dbReference type="InterPro" id="IPR009072">
    <property type="entry name" value="Histone-fold"/>
</dbReference>
<dbReference type="InterPro" id="IPR002119">
    <property type="entry name" value="Histone_H2A"/>
</dbReference>
<dbReference type="InterPro" id="IPR007125">
    <property type="entry name" value="Histone_H2A/H2B/H3"/>
</dbReference>
<dbReference type="InterPro" id="IPR032454">
    <property type="entry name" value="Histone_H2A_C"/>
</dbReference>
<dbReference type="InterPro" id="IPR032458">
    <property type="entry name" value="Histone_H2A_CS"/>
</dbReference>
<dbReference type="PANTHER" id="PTHR23430">
    <property type="entry name" value="HISTONE H2A"/>
    <property type="match status" value="1"/>
</dbReference>
<dbReference type="Pfam" id="PF00125">
    <property type="entry name" value="Histone"/>
    <property type="match status" value="1"/>
</dbReference>
<dbReference type="Pfam" id="PF16211">
    <property type="entry name" value="Histone_H2A_C"/>
    <property type="match status" value="1"/>
</dbReference>
<dbReference type="PRINTS" id="PR00620">
    <property type="entry name" value="HISTONEH2A"/>
</dbReference>
<dbReference type="SMART" id="SM00414">
    <property type="entry name" value="H2A"/>
    <property type="match status" value="1"/>
</dbReference>
<dbReference type="SUPFAM" id="SSF47113">
    <property type="entry name" value="Histone-fold"/>
    <property type="match status" value="1"/>
</dbReference>
<dbReference type="PROSITE" id="PS00046">
    <property type="entry name" value="HISTONE_H2A"/>
    <property type="match status" value="1"/>
</dbReference>
<evidence type="ECO:0000250" key="1">
    <source>
        <dbReference type="UniProtKB" id="P04908"/>
    </source>
</evidence>
<evidence type="ECO:0000250" key="2">
    <source>
        <dbReference type="UniProtKB" id="P0C0S5"/>
    </source>
</evidence>
<evidence type="ECO:0000250" key="3">
    <source>
        <dbReference type="UniProtKB" id="P0C0S8"/>
    </source>
</evidence>
<evidence type="ECO:0000256" key="4">
    <source>
        <dbReference type="SAM" id="MobiDB-lite"/>
    </source>
</evidence>
<evidence type="ECO:0000269" key="5">
    <source>
    </source>
</evidence>
<evidence type="ECO:0000269" key="6">
    <source>
    </source>
</evidence>
<evidence type="ECO:0000269" key="7">
    <source>
    </source>
</evidence>
<evidence type="ECO:0000269" key="8">
    <source>
    </source>
</evidence>
<evidence type="ECO:0000269" key="9">
    <source>
    </source>
</evidence>
<evidence type="ECO:0000269" key="10">
    <source>
    </source>
</evidence>
<evidence type="ECO:0000269" key="11">
    <source>
    </source>
</evidence>
<evidence type="ECO:0000305" key="12"/>
<evidence type="ECO:0000305" key="13">
    <source>
    </source>
</evidence>
<sequence length="130" mass="14162">MSGRGKQGGKARAKAKTRSSRAGLQFPVGRVHRLLRKGNYSERVGAGAPVYLAAVLEYLTAEILELAGNAARDNKKTRIIPRHLQLAIRNDEELNKLLGRVTIAQGGVLPNIQAVLLPKKTESHHKPKGK</sequence>
<reference key="1">
    <citation type="journal article" date="2002" name="Genomics">
        <title>The human and mouse replication-dependent histone genes.</title>
        <authorList>
            <person name="Marzluff W.F."/>
            <person name="Gongidi P."/>
            <person name="Woods K.R."/>
            <person name="Jin J."/>
            <person name="Maltais L.J."/>
        </authorList>
    </citation>
    <scope>NUCLEOTIDE SEQUENCE [GENOMIC DNA]</scope>
</reference>
<reference key="2">
    <citation type="journal article" date="2004" name="Genome Res.">
        <title>The status, quality, and expansion of the NIH full-length cDNA project: the Mammalian Gene Collection (MGC).</title>
        <authorList>
            <consortium name="The MGC Project Team"/>
        </authorList>
    </citation>
    <scope>NUCLEOTIDE SEQUENCE [LARGE SCALE MRNA]</scope>
</reference>
<reference key="3">
    <citation type="journal article" date="2004" name="Dev. Cell">
        <title>Polycomb group proteins Ring1A/B link ubiquitylation of histone H2A to heritable gene silencing and X inactivation.</title>
        <authorList>
            <person name="de Napoles M."/>
            <person name="Mermoud J.E."/>
            <person name="Wakao R."/>
            <person name="Tang Y.A."/>
            <person name="Endoh M."/>
            <person name="Appanah R."/>
            <person name="Nesterova T.B."/>
            <person name="Silva J."/>
            <person name="Otte A.P."/>
            <person name="Vidal M."/>
            <person name="Koseki H."/>
            <person name="Brockdorff N."/>
        </authorList>
    </citation>
    <scope>UBIQUITINATION AT LYS-120</scope>
</reference>
<reference key="4">
    <citation type="journal article" date="2004" name="J. Biol. Chem.">
        <title>Ring1b-mediated H2A ubiquitination associates with inactive X chromosomes and is involved in initiation of X inactivation.</title>
        <authorList>
            <person name="Fang J."/>
            <person name="Chen T."/>
            <person name="Chadwick B."/>
            <person name="Li E."/>
            <person name="Zhang Y."/>
        </authorList>
    </citation>
    <scope>UBIQUITINATION AT LYS-120</scope>
</reference>
<reference key="5">
    <citation type="journal article" date="2006" name="Nat. Cell Biol.">
        <title>Blimp1 associates with Prmt5 and directs histone arginine methylation in mouse germ cells.</title>
        <authorList>
            <person name="Ancelin K."/>
            <person name="Lange U.C."/>
            <person name="Hajkova P."/>
            <person name="Schneider R."/>
            <person name="Bannister A.J."/>
            <person name="Kouzarides T."/>
            <person name="Surani M.A."/>
        </authorList>
    </citation>
    <scope>METHYLATION AT ARG-4</scope>
</reference>
<reference key="6">
    <citation type="journal article" date="2011" name="Cell">
        <title>Identification of 67 histone marks and histone lysine crotonylation as a new type of histone modification.</title>
        <authorList>
            <person name="Tan M."/>
            <person name="Luo H."/>
            <person name="Lee S."/>
            <person name="Jin F."/>
            <person name="Yang J.S."/>
            <person name="Montellier E."/>
            <person name="Buchou T."/>
            <person name="Cheng Z."/>
            <person name="Rousseaux S."/>
            <person name="Rajagopal N."/>
            <person name="Lu Z."/>
            <person name="Ye Z."/>
            <person name="Zhu Q."/>
            <person name="Wysocka J."/>
            <person name="Ye Y."/>
            <person name="Khochbin S."/>
            <person name="Ren B."/>
            <person name="Zhao Y."/>
        </authorList>
    </citation>
    <scope>CROTONYLATION AT LYS-37 AND LYS-119</scope>
</reference>
<reference key="7">
    <citation type="journal article" date="2014" name="Nat. Chem. Biol.">
        <title>Lysine 2-hydroxyisobutyrylation is a widely distributed active histone mark.</title>
        <authorList>
            <person name="Dai L."/>
            <person name="Peng C."/>
            <person name="Montellier E."/>
            <person name="Lu Z."/>
            <person name="Chen Y."/>
            <person name="Ishii H."/>
            <person name="Debernardi A."/>
            <person name="Buchou T."/>
            <person name="Rousseaux S."/>
            <person name="Jin F."/>
            <person name="Sabari B.R."/>
            <person name="Deng Z."/>
            <person name="Allis C.D."/>
            <person name="Ren B."/>
            <person name="Khochbin S."/>
            <person name="Zhao Y."/>
        </authorList>
    </citation>
    <scope>HYDROXYBUTYRYLATION AT LYS-6; LYS-10; LYS-37; LYS-75; LYS-76; LYS-96 AND LYS-119</scope>
</reference>
<reference key="8">
    <citation type="journal article" date="2014" name="Nature">
        <title>Glutamine methylation in histone H2A is an RNA-polymerase-I-dedicated modification.</title>
        <authorList>
            <person name="Tessarz P."/>
            <person name="Santos-Rosa H."/>
            <person name="Robson S.C."/>
            <person name="Sylvestersen K.B."/>
            <person name="Nelson C.J."/>
            <person name="Nielsen M.L."/>
            <person name="Kouzarides T."/>
        </authorList>
    </citation>
    <scope>METHYLATION AT GLN-105</scope>
</reference>
<reference key="9">
    <citation type="journal article" date="2016" name="Mol. Cell">
        <title>Metabolic regulation of gene expression by histone lysine beta-hydroxybutyrylation.</title>
        <authorList>
            <person name="Xie Z."/>
            <person name="Zhang D."/>
            <person name="Chung D."/>
            <person name="Tang Z."/>
            <person name="Huang H."/>
            <person name="Dai L."/>
            <person name="Qi S."/>
            <person name="Li J."/>
            <person name="Colak G."/>
            <person name="Chen Y."/>
            <person name="Xia C."/>
            <person name="Peng C."/>
            <person name="Ruan H."/>
            <person name="Kirkey M."/>
            <person name="Wang D."/>
            <person name="Jensen L.M."/>
            <person name="Kwon O.K."/>
            <person name="Lee S."/>
            <person name="Pletcher S.D."/>
            <person name="Tan M."/>
            <person name="Lombard D.B."/>
            <person name="White K.P."/>
            <person name="Zhao H."/>
            <person name="Li J."/>
            <person name="Roeder R.G."/>
            <person name="Yang X."/>
            <person name="Zhao Y."/>
        </authorList>
    </citation>
    <scope>HYDROXYBUTYRYLATION AT LYS-6; LYS-37; LYS-120 AND LYS-126</scope>
</reference>
<protein>
    <recommendedName>
        <fullName>Histone H2A type 1-F</fullName>
    </recommendedName>
</protein>
<comment type="function">
    <text>Core component of nucleosome. Nucleosomes wrap and compact DNA into chromatin, limiting DNA accessibility to the cellular machineries which require DNA as a template. Histones thereby play a central role in transcription regulation, DNA repair, DNA replication and chromosomal stability. DNA accessibility is regulated via a complex set of post-translational modifications of histones, also called histone code, and nucleosome remodeling.</text>
</comment>
<comment type="subunit">
    <text>The nucleosome is a histone octamer containing two molecules each of H2A, H2B, H3 and H4 assembled in one H3-H4 heterotetramer and two H2A-H2B heterodimers. The octamer wraps approximately 147 bp of DNA.</text>
</comment>
<comment type="subcellular location">
    <subcellularLocation>
        <location>Nucleus</location>
    </subcellularLocation>
    <subcellularLocation>
        <location>Chromosome</location>
    </subcellularLocation>
</comment>
<comment type="PTM">
    <text evidence="3">Deiminated on Arg-4 in granulocytes upon calcium entry.</text>
</comment>
<comment type="PTM">
    <text evidence="3 5 6 9">Monoubiquitination of Lys-120 (H2AK119Ub) by RING1, TRIM37 and RNF2/RING2 complex gives a specific tag for epigenetic transcriptional repression and participates in X chromosome inactivation of female mammals. It is involved in the initiation of both imprinted and random X inactivation. Ubiquitinated H2A is enriched in inactive X chromosome chromatin. Ubiquitination of H2A functions downstream of methylation of 'Lys-27' of histone H3 (H3K27me). H2AK119Ub by RNF2/RING2 can also be induced by ultraviolet and may be involved in DNA repair. Following DNA double-strand breaks (DSBs), it is ubiquitinated through 'Lys-63' linkage of ubiquitin moieties by the E2 ligase UBE2N and the E3 ligases RNF8 and RNF168, leading to the recruitment of repair proteins to sites of DNA damage. Ubiquitination at Lys-14 and Lys-16 (H2AK13Ub and H2AK15Ub, respectively) in response to DNA damage is initiated by RNF168 that mediates monoubiquitination at these 2 sites, and 'Lys-63'-linked ubiquitin are then conjugated to monoubiquitin; RNF8 is able to extend 'Lys-63'-linked ubiquitin chains in vitro. H2AK119Ub and ionizing radiation-induced 'Lys-63'-linked ubiquitination (H2AK13Ub and H2AK15Ub) are distinct events.</text>
</comment>
<comment type="PTM">
    <text evidence="3">Phosphorylation on Ser-2 (H2AS1ph) is enhanced during mitosis. Phosphorylation on Ser-2 by RPS6KA5/MSK1 directly represses transcription. Acetylation of H3 inhibits Ser-2 phosphorylation by RPS6KA5/MSK1. Phosphorylation at Thr-121 (H2AT120ph) by DCAF1 is present in the regulatory region of many tumor suppresor genes and down-regulates their transcription.</text>
</comment>
<comment type="PTM">
    <text evidence="7">Symmetric dimethylation on Arg-4 by the PRDM1/PRMT5 complex may play a crucial role in the germ-cell lineage.</text>
</comment>
<comment type="PTM">
    <text evidence="9">Glutamine methylation at Gln-105 (H2AQ104me) by FBL is specifically dedicated to polymerase I. It is present at 35S ribosomal DNA locus and impairs binding of the FACT complex.</text>
</comment>
<comment type="PTM">
    <text evidence="8">Crotonylation (Kcr) is specifically present in male germ cells and marks testis-specific genes in post-meiotic cells, including X-linked genes that escape sex chromosome inactivation in haploid cells. Crotonylation marks active promoters and enhancers and confers resistance to transcriptional repressors. It is also associated with post-meiotically activated genes on autosomes.</text>
</comment>
<comment type="PTM">
    <text evidence="11">Hydroxybutyrylation of histones is induced by starvation.</text>
</comment>
<comment type="PTM">
    <text evidence="2">Lactylated in macrophages by EP300/P300 by using lactoyl-CoA directly derived from endogenous or exogenous lactate, leading to stimulates gene transcription.</text>
</comment>
<comment type="similarity">
    <text evidence="12">Belongs to the histone H2A family.</text>
</comment>